<dbReference type="EC" id="1.2.1.70" evidence="1"/>
<dbReference type="EMBL" id="CP000850">
    <property type="protein sequence ID" value="ABV96355.1"/>
    <property type="molecule type" value="Genomic_DNA"/>
</dbReference>
<dbReference type="SMR" id="A8LZI9"/>
<dbReference type="STRING" id="391037.Sare_0426"/>
<dbReference type="KEGG" id="saq:Sare_0426"/>
<dbReference type="PATRIC" id="fig|391037.6.peg.433"/>
<dbReference type="eggNOG" id="COG0373">
    <property type="taxonomic scope" value="Bacteria"/>
</dbReference>
<dbReference type="HOGENOM" id="CLU_035113_4_0_11"/>
<dbReference type="OrthoDB" id="110209at2"/>
<dbReference type="UniPathway" id="UPA00251">
    <property type="reaction ID" value="UER00316"/>
</dbReference>
<dbReference type="GO" id="GO:0008883">
    <property type="term" value="F:glutamyl-tRNA reductase activity"/>
    <property type="evidence" value="ECO:0007669"/>
    <property type="project" value="UniProtKB-UniRule"/>
</dbReference>
<dbReference type="GO" id="GO:0050661">
    <property type="term" value="F:NADP binding"/>
    <property type="evidence" value="ECO:0007669"/>
    <property type="project" value="InterPro"/>
</dbReference>
<dbReference type="GO" id="GO:0019353">
    <property type="term" value="P:protoporphyrinogen IX biosynthetic process from glutamate"/>
    <property type="evidence" value="ECO:0007669"/>
    <property type="project" value="TreeGrafter"/>
</dbReference>
<dbReference type="CDD" id="cd05213">
    <property type="entry name" value="NAD_bind_Glutamyl_tRNA_reduct"/>
    <property type="match status" value="1"/>
</dbReference>
<dbReference type="FunFam" id="3.30.460.30:FF:000001">
    <property type="entry name" value="Glutamyl-tRNA reductase"/>
    <property type="match status" value="1"/>
</dbReference>
<dbReference type="Gene3D" id="3.30.460.30">
    <property type="entry name" value="Glutamyl-tRNA reductase, N-terminal domain"/>
    <property type="match status" value="1"/>
</dbReference>
<dbReference type="Gene3D" id="3.40.50.720">
    <property type="entry name" value="NAD(P)-binding Rossmann-like Domain"/>
    <property type="match status" value="1"/>
</dbReference>
<dbReference type="HAMAP" id="MF_00087">
    <property type="entry name" value="Glu_tRNA_reductase"/>
    <property type="match status" value="1"/>
</dbReference>
<dbReference type="InterPro" id="IPR000343">
    <property type="entry name" value="4pyrrol_synth_GluRdtase"/>
</dbReference>
<dbReference type="InterPro" id="IPR015896">
    <property type="entry name" value="4pyrrol_synth_GluRdtase_dimer"/>
</dbReference>
<dbReference type="InterPro" id="IPR015895">
    <property type="entry name" value="4pyrrol_synth_GluRdtase_N"/>
</dbReference>
<dbReference type="InterPro" id="IPR018214">
    <property type="entry name" value="GluRdtase_CS"/>
</dbReference>
<dbReference type="InterPro" id="IPR036453">
    <property type="entry name" value="GluRdtase_dimer_dom_sf"/>
</dbReference>
<dbReference type="InterPro" id="IPR036343">
    <property type="entry name" value="GluRdtase_N_sf"/>
</dbReference>
<dbReference type="InterPro" id="IPR036291">
    <property type="entry name" value="NAD(P)-bd_dom_sf"/>
</dbReference>
<dbReference type="InterPro" id="IPR006151">
    <property type="entry name" value="Shikm_DH/Glu-tRNA_Rdtase"/>
</dbReference>
<dbReference type="NCBIfam" id="TIGR01035">
    <property type="entry name" value="hemA"/>
    <property type="match status" value="1"/>
</dbReference>
<dbReference type="NCBIfam" id="NF000744">
    <property type="entry name" value="PRK00045.1-3"/>
    <property type="match status" value="1"/>
</dbReference>
<dbReference type="PANTHER" id="PTHR43013">
    <property type="entry name" value="GLUTAMYL-TRNA REDUCTASE"/>
    <property type="match status" value="1"/>
</dbReference>
<dbReference type="PANTHER" id="PTHR43013:SF1">
    <property type="entry name" value="GLUTAMYL-TRNA REDUCTASE"/>
    <property type="match status" value="1"/>
</dbReference>
<dbReference type="Pfam" id="PF00745">
    <property type="entry name" value="GlutR_dimer"/>
    <property type="match status" value="1"/>
</dbReference>
<dbReference type="Pfam" id="PF05201">
    <property type="entry name" value="GlutR_N"/>
    <property type="match status" value="1"/>
</dbReference>
<dbReference type="Pfam" id="PF01488">
    <property type="entry name" value="Shikimate_DH"/>
    <property type="match status" value="1"/>
</dbReference>
<dbReference type="PIRSF" id="PIRSF000445">
    <property type="entry name" value="4pyrrol_synth_GluRdtase"/>
    <property type="match status" value="1"/>
</dbReference>
<dbReference type="SUPFAM" id="SSF69742">
    <property type="entry name" value="Glutamyl tRNA-reductase catalytic, N-terminal domain"/>
    <property type="match status" value="1"/>
</dbReference>
<dbReference type="SUPFAM" id="SSF69075">
    <property type="entry name" value="Glutamyl tRNA-reductase dimerization domain"/>
    <property type="match status" value="1"/>
</dbReference>
<dbReference type="SUPFAM" id="SSF51735">
    <property type="entry name" value="NAD(P)-binding Rossmann-fold domains"/>
    <property type="match status" value="1"/>
</dbReference>
<dbReference type="PROSITE" id="PS00747">
    <property type="entry name" value="GLUTR"/>
    <property type="match status" value="1"/>
</dbReference>
<reference key="1">
    <citation type="submission" date="2007-10" db="EMBL/GenBank/DDBJ databases">
        <title>Complete sequence of Salinispora arenicola CNS-205.</title>
        <authorList>
            <consortium name="US DOE Joint Genome Institute"/>
            <person name="Copeland A."/>
            <person name="Lucas S."/>
            <person name="Lapidus A."/>
            <person name="Barry K."/>
            <person name="Glavina del Rio T."/>
            <person name="Dalin E."/>
            <person name="Tice H."/>
            <person name="Pitluck S."/>
            <person name="Foster B."/>
            <person name="Schmutz J."/>
            <person name="Larimer F."/>
            <person name="Land M."/>
            <person name="Hauser L."/>
            <person name="Kyrpides N."/>
            <person name="Ivanova N."/>
            <person name="Jensen P.R."/>
            <person name="Moore B.S."/>
            <person name="Penn K."/>
            <person name="Jenkins C."/>
            <person name="Udwary D."/>
            <person name="Xiang L."/>
            <person name="Gontang E."/>
            <person name="Richardson P."/>
        </authorList>
    </citation>
    <scope>NUCLEOTIDE SEQUENCE [LARGE SCALE GENOMIC DNA]</scope>
    <source>
        <strain>CNS-205</strain>
    </source>
</reference>
<feature type="chain" id="PRO_1000075421" description="Glutamyl-tRNA reductase">
    <location>
        <begin position="1"/>
        <end position="455"/>
    </location>
</feature>
<feature type="active site" description="Nucleophile" evidence="1">
    <location>
        <position position="50"/>
    </location>
</feature>
<feature type="binding site" evidence="1">
    <location>
        <begin position="49"/>
        <end position="52"/>
    </location>
    <ligand>
        <name>substrate</name>
    </ligand>
</feature>
<feature type="binding site" evidence="1">
    <location>
        <position position="109"/>
    </location>
    <ligand>
        <name>substrate</name>
    </ligand>
</feature>
<feature type="binding site" evidence="1">
    <location>
        <begin position="114"/>
        <end position="116"/>
    </location>
    <ligand>
        <name>substrate</name>
    </ligand>
</feature>
<feature type="binding site" evidence="1">
    <location>
        <position position="120"/>
    </location>
    <ligand>
        <name>substrate</name>
    </ligand>
</feature>
<feature type="binding site" evidence="1">
    <location>
        <begin position="190"/>
        <end position="195"/>
    </location>
    <ligand>
        <name>NADP(+)</name>
        <dbReference type="ChEBI" id="CHEBI:58349"/>
    </ligand>
</feature>
<feature type="site" description="Important for activity" evidence="1">
    <location>
        <position position="99"/>
    </location>
</feature>
<proteinExistence type="inferred from homology"/>
<sequence length="455" mass="47087">MKLLVVGASYRTAPVAALERLAVAPADLPHALARLVAQPYVSEAVLVSTCNRVEVYAAVSGFHGGLGDICAVLAESTGVPPAALADHLYVHFDAAAVKHAFRVATGLDSMVVGEAQILGQLRDAYHWASGADTTGRLLHELMQQALRVGKRAHSETGIDRAGQSVVTAALGLATELLNSDLAARPALVVGAGAMGSLGVATLSRLGAGPVAVTNRGADRAVRLAESYGATAVPIADLTATLSTVDIVVAATAAPEAVLTREVVTRALADRKPSRGPLVLLDLAVPRDVEPGVADLPGVQVIDIDRMAALVANGPAAADAAAVERIVATEVDAFLNWLRGADVAPTVAALRGRADNVVTVELGRLAQRRPDLTDDQRDEVARTVHRVVQRLLHQPTVRVRQLAAEPGGDQYAALLRELFDLEVPQTSPVGTVPEVVVPEAVPPLGGAAEDPSTGGQ</sequence>
<comment type="function">
    <text evidence="1">Catalyzes the NADPH-dependent reduction of glutamyl-tRNA(Glu) to glutamate 1-semialdehyde (GSA).</text>
</comment>
<comment type="catalytic activity">
    <reaction evidence="1">
        <text>(S)-4-amino-5-oxopentanoate + tRNA(Glu) + NADP(+) = L-glutamyl-tRNA(Glu) + NADPH + H(+)</text>
        <dbReference type="Rhea" id="RHEA:12344"/>
        <dbReference type="Rhea" id="RHEA-COMP:9663"/>
        <dbReference type="Rhea" id="RHEA-COMP:9680"/>
        <dbReference type="ChEBI" id="CHEBI:15378"/>
        <dbReference type="ChEBI" id="CHEBI:57501"/>
        <dbReference type="ChEBI" id="CHEBI:57783"/>
        <dbReference type="ChEBI" id="CHEBI:58349"/>
        <dbReference type="ChEBI" id="CHEBI:78442"/>
        <dbReference type="ChEBI" id="CHEBI:78520"/>
        <dbReference type="EC" id="1.2.1.70"/>
    </reaction>
</comment>
<comment type="pathway">
    <text evidence="1">Porphyrin-containing compound metabolism; protoporphyrin-IX biosynthesis; 5-aminolevulinate from L-glutamyl-tRNA(Glu): step 1/2.</text>
</comment>
<comment type="subunit">
    <text evidence="1">Homodimer.</text>
</comment>
<comment type="domain">
    <text evidence="1">Possesses an unusual extended V-shaped dimeric structure with each monomer consisting of three distinct domains arranged along a curved 'spinal' alpha-helix. The N-terminal catalytic domain specifically recognizes the glutamate moiety of the substrate. The second domain is the NADPH-binding domain, and the third C-terminal domain is responsible for dimerization.</text>
</comment>
<comment type="miscellaneous">
    <text evidence="1">During catalysis, the active site Cys acts as a nucleophile attacking the alpha-carbonyl group of tRNA-bound glutamate with the formation of a thioester intermediate between enzyme and glutamate, and the concomitant release of tRNA(Glu). The thioester intermediate is finally reduced by direct hydride transfer from NADPH, to form the product GSA.</text>
</comment>
<comment type="similarity">
    <text evidence="1">Belongs to the glutamyl-tRNA reductase family.</text>
</comment>
<keyword id="KW-0521">NADP</keyword>
<keyword id="KW-0560">Oxidoreductase</keyword>
<keyword id="KW-0627">Porphyrin biosynthesis</keyword>
<accession>A8LZI9</accession>
<name>HEM1_SALAI</name>
<evidence type="ECO:0000255" key="1">
    <source>
        <dbReference type="HAMAP-Rule" id="MF_00087"/>
    </source>
</evidence>
<organism>
    <name type="scientific">Salinispora arenicola (strain CNS-205)</name>
    <dbReference type="NCBI Taxonomy" id="391037"/>
    <lineage>
        <taxon>Bacteria</taxon>
        <taxon>Bacillati</taxon>
        <taxon>Actinomycetota</taxon>
        <taxon>Actinomycetes</taxon>
        <taxon>Micromonosporales</taxon>
        <taxon>Micromonosporaceae</taxon>
        <taxon>Salinispora</taxon>
    </lineage>
</organism>
<protein>
    <recommendedName>
        <fullName evidence="1">Glutamyl-tRNA reductase</fullName>
        <shortName evidence="1">GluTR</shortName>
        <ecNumber evidence="1">1.2.1.70</ecNumber>
    </recommendedName>
</protein>
<gene>
    <name evidence="1" type="primary">hemA</name>
    <name type="ordered locus">Sare_0426</name>
</gene>